<comment type="function">
    <text evidence="5 6 7">Neuropeptide that controls movement such as roaming, foraging and backwards locomotion or 'reversals' in response to environmental cues such as food availability or volatile odorants such as octanol (PubMed:18216257, PubMed:27223098). Antagonizes AIB interneuron activity to control bacterial colonization and may negatively regulate the expression of immunity-related genes such as pqm-1 and dod-22 in response to infection by P.aeruginosa (PubMed:27133473).</text>
</comment>
<comment type="subcellular location">
    <subcellularLocation>
        <location evidence="9">Cell membrane</location>
        <topology evidence="1">Multi-pass membrane protein</topology>
    </subcellularLocation>
</comment>
<comment type="tissue specificity">
    <text evidence="5">Exclusively expressed in the AIB interneuron.</text>
</comment>
<comment type="developmental stage">
    <text evidence="5">Not expressed in embryos, but is expressed in the AIB interneuron region of the head during all larval stages of development.</text>
</comment>
<comment type="disruption phenotype">
    <text evidence="5">Decreased roaming in response to food during the L3 and L4 stages of larval development and adult stages, but not at the L1 stage of larval development. Increased lipid accumulation.</text>
</comment>
<comment type="similarity">
    <text evidence="3">Belongs to the G-protein coupled receptor 1 family.</text>
</comment>
<evidence type="ECO:0000255" key="1"/>
<evidence type="ECO:0000255" key="2">
    <source>
        <dbReference type="PROSITE-ProRule" id="PRU00498"/>
    </source>
</evidence>
<evidence type="ECO:0000255" key="3">
    <source>
        <dbReference type="PROSITE-ProRule" id="PRU00521"/>
    </source>
</evidence>
<evidence type="ECO:0000256" key="4">
    <source>
        <dbReference type="SAM" id="MobiDB-lite"/>
    </source>
</evidence>
<evidence type="ECO:0000269" key="5">
    <source>
    </source>
</evidence>
<evidence type="ECO:0000269" key="6">
    <source>
    </source>
</evidence>
<evidence type="ECO:0000269" key="7">
    <source>
    </source>
</evidence>
<evidence type="ECO:0000305" key="8"/>
<evidence type="ECO:0000305" key="9">
    <source>
    </source>
</evidence>
<evidence type="ECO:0000305" key="10">
    <source>
    </source>
</evidence>
<evidence type="ECO:0000312" key="11">
    <source>
        <dbReference type="Proteomes" id="UP000001940"/>
    </source>
</evidence>
<evidence type="ECO:0000312" key="12">
    <source>
        <dbReference type="WormBase" id="ZK455.3"/>
    </source>
</evidence>
<gene>
    <name evidence="12" type="primary">npr-9</name>
    <name evidence="12" type="ORF">ZK455.3</name>
</gene>
<proteinExistence type="evidence at transcript level"/>
<name>NPR9_CAEEL</name>
<dbReference type="EMBL" id="BX284606">
    <property type="protein sequence ID" value="CAA91489.1"/>
    <property type="molecule type" value="Genomic_DNA"/>
</dbReference>
<dbReference type="PIR" id="T27866">
    <property type="entry name" value="T27866"/>
</dbReference>
<dbReference type="RefSeq" id="NP_001361821.1">
    <property type="nucleotide sequence ID" value="NM_001375132.1"/>
</dbReference>
<dbReference type="RefSeq" id="NP_509896.1">
    <property type="nucleotide sequence ID" value="NM_077495.1"/>
</dbReference>
<dbReference type="SMR" id="Q23497"/>
<dbReference type="FunCoup" id="Q23497">
    <property type="interactions" value="18"/>
</dbReference>
<dbReference type="STRING" id="6239.ZK455.3.1"/>
<dbReference type="GlyCosmos" id="Q23497">
    <property type="glycosylation" value="1 site, No reported glycans"/>
</dbReference>
<dbReference type="PaxDb" id="6239-ZK455.3"/>
<dbReference type="EnsemblMetazoa" id="ZK455.3.1">
    <property type="protein sequence ID" value="ZK455.3.1"/>
    <property type="gene ID" value="WBGene00013974"/>
</dbReference>
<dbReference type="GeneID" id="191320"/>
<dbReference type="UCSC" id="ZK455.3">
    <property type="organism name" value="c. elegans"/>
</dbReference>
<dbReference type="AGR" id="WB:WBGene00013974"/>
<dbReference type="WormBase" id="ZK455.3">
    <property type="protein sequence ID" value="CE53640"/>
    <property type="gene ID" value="WBGene00013974"/>
    <property type="gene designation" value="npr-9"/>
</dbReference>
<dbReference type="eggNOG" id="KOG3656">
    <property type="taxonomic scope" value="Eukaryota"/>
</dbReference>
<dbReference type="GeneTree" id="ENSGT00940000164736"/>
<dbReference type="HOGENOM" id="CLU_009579_6_4_1"/>
<dbReference type="InParanoid" id="Q23497"/>
<dbReference type="OrthoDB" id="2132067at2759"/>
<dbReference type="PhylomeDB" id="Q23497"/>
<dbReference type="PRO" id="PR:Q23497"/>
<dbReference type="Proteomes" id="UP000001940">
    <property type="component" value="Chromosome X"/>
</dbReference>
<dbReference type="Bgee" id="WBGene00013974">
    <property type="expression patterns" value="Expressed in larva"/>
</dbReference>
<dbReference type="GO" id="GO:0005886">
    <property type="term" value="C:plasma membrane"/>
    <property type="evidence" value="ECO:0000318"/>
    <property type="project" value="GO_Central"/>
</dbReference>
<dbReference type="GO" id="GO:0004930">
    <property type="term" value="F:G protein-coupled receptor activity"/>
    <property type="evidence" value="ECO:0000318"/>
    <property type="project" value="GO_Central"/>
</dbReference>
<dbReference type="GO" id="GO:0060756">
    <property type="term" value="P:foraging behavior"/>
    <property type="evidence" value="ECO:0000315"/>
    <property type="project" value="WormBase"/>
</dbReference>
<dbReference type="GO" id="GO:0007186">
    <property type="term" value="P:G protein-coupled receptor signaling pathway"/>
    <property type="evidence" value="ECO:0000318"/>
    <property type="project" value="GO_Central"/>
</dbReference>
<dbReference type="CDD" id="cd15096">
    <property type="entry name" value="7tmA_AstA_R_insect"/>
    <property type="match status" value="1"/>
</dbReference>
<dbReference type="FunFam" id="1.20.1070.10:FF:000389">
    <property type="entry name" value="Galanin-like G-protein coupled receptor npr-9"/>
    <property type="match status" value="1"/>
</dbReference>
<dbReference type="Gene3D" id="1.20.1070.10">
    <property type="entry name" value="Rhodopsin 7-helix transmembrane proteins"/>
    <property type="match status" value="1"/>
</dbReference>
<dbReference type="InterPro" id="IPR000405">
    <property type="entry name" value="Galanin_rcpt"/>
</dbReference>
<dbReference type="InterPro" id="IPR000276">
    <property type="entry name" value="GPCR_Rhodpsn"/>
</dbReference>
<dbReference type="InterPro" id="IPR017452">
    <property type="entry name" value="GPCR_Rhodpsn_7TM"/>
</dbReference>
<dbReference type="PANTHER" id="PTHR45695:SF23">
    <property type="entry name" value="GALANIN-LIKE G-PROTEIN COUPLED RECEPTOR NPR-9"/>
    <property type="match status" value="1"/>
</dbReference>
<dbReference type="PANTHER" id="PTHR45695">
    <property type="entry name" value="LEUCOKININ RECEPTOR-RELATED"/>
    <property type="match status" value="1"/>
</dbReference>
<dbReference type="Pfam" id="PF00001">
    <property type="entry name" value="7tm_1"/>
    <property type="match status" value="1"/>
</dbReference>
<dbReference type="PRINTS" id="PR00663">
    <property type="entry name" value="GALANINR"/>
</dbReference>
<dbReference type="PRINTS" id="PR00237">
    <property type="entry name" value="GPCRRHODOPSN"/>
</dbReference>
<dbReference type="SMART" id="SM01381">
    <property type="entry name" value="7TM_GPCR_Srsx"/>
    <property type="match status" value="1"/>
</dbReference>
<dbReference type="SUPFAM" id="SSF81321">
    <property type="entry name" value="Family A G protein-coupled receptor-like"/>
    <property type="match status" value="1"/>
</dbReference>
<dbReference type="PROSITE" id="PS00237">
    <property type="entry name" value="G_PROTEIN_RECEP_F1_1"/>
    <property type="match status" value="1"/>
</dbReference>
<dbReference type="PROSITE" id="PS50262">
    <property type="entry name" value="G_PROTEIN_RECEP_F1_2"/>
    <property type="match status" value="1"/>
</dbReference>
<protein>
    <recommendedName>
        <fullName evidence="10">Galanin-like G-protein coupled receptor npr-9</fullName>
    </recommendedName>
    <alternativeName>
        <fullName evidence="8">Probable neuropeptide receptor 9</fullName>
    </alternativeName>
</protein>
<accession>Q23497</accession>
<reference evidence="11" key="1">
    <citation type="journal article" date="1998" name="Science">
        <title>Genome sequence of the nematode C. elegans: a platform for investigating biology.</title>
        <authorList>
            <consortium name="The C. elegans sequencing consortium"/>
        </authorList>
    </citation>
    <scope>NUCLEOTIDE SEQUENCE [LARGE SCALE GENOMIC DNA]</scope>
    <source>
        <strain evidence="11">Bristol N2</strain>
    </source>
</reference>
<reference evidence="8" key="2">
    <citation type="journal article" date="2008" name="Proc. Natl. Acad. Sci. U.S.A.">
        <title>A Caenorhabditis elegans allatostatin/galanin-like receptor NPR-9 inhibits local search behavior in response to feeding cues.</title>
        <authorList>
            <person name="Bendena W.G."/>
            <person name="Boudreau J.R."/>
            <person name="Papanicolaou T."/>
            <person name="Maltby M."/>
            <person name="Tobe S.S."/>
            <person name="Chin-Sang I.D."/>
        </authorList>
    </citation>
    <scope>FUNCTION</scope>
    <scope>SUBCELLULAR LOCATION</scope>
    <scope>TISSUE SPECIFICITY</scope>
    <scope>DEVELOPMENTAL STAGE</scope>
    <scope>DISRUPTION PHENOTYPE</scope>
</reference>
<reference evidence="8" key="3">
    <citation type="journal article" date="2016" name="PLoS Genet.">
        <title>NPR-9, a galanin-like G-protein coupled receptor, and GLR-1 regulate interneuronal circuitry underlying multisensory integration of environmental cues in Caenorhabditis elegans.</title>
        <authorList>
            <person name="Campbell J.C."/>
            <person name="Polan-Couillard L.F."/>
            <person name="Chin-Sang I.D."/>
            <person name="Bendena W.G."/>
        </authorList>
    </citation>
    <scope>FUNCTION</scope>
</reference>
<reference evidence="8" key="4">
    <citation type="journal article" date="2018" name="Cell. Mol. Immunol.">
        <title>NPR-9 regulates the innate immune response in Caenorhabditis elegans by antagonizing the activity of AIB interneurons.</title>
        <authorList>
            <person name="Yu Y."/>
            <person name="Zhi L."/>
            <person name="Wu Q."/>
            <person name="Jing L."/>
            <person name="Wang D."/>
        </authorList>
    </citation>
    <scope>FUNCTION</scope>
</reference>
<feature type="chain" id="PRO_0000437202" description="Galanin-like G-protein coupled receptor npr-9" evidence="8">
    <location>
        <begin position="1"/>
        <end position="431"/>
    </location>
</feature>
<feature type="topological domain" description="Extracellular" evidence="8">
    <location>
        <begin position="1"/>
        <end position="34"/>
    </location>
</feature>
<feature type="transmembrane region" description="Helical; Name=1" evidence="1">
    <location>
        <begin position="35"/>
        <end position="55"/>
    </location>
</feature>
<feature type="topological domain" description="Cytoplasmic" evidence="8">
    <location>
        <begin position="56"/>
        <end position="66"/>
    </location>
</feature>
<feature type="transmembrane region" description="Helical; Name=2" evidence="1">
    <location>
        <begin position="67"/>
        <end position="87"/>
    </location>
</feature>
<feature type="topological domain" description="Extracellular" evidence="8">
    <location>
        <begin position="88"/>
        <end position="101"/>
    </location>
</feature>
<feature type="transmembrane region" description="Helical; Name=3" evidence="1">
    <location>
        <begin position="102"/>
        <end position="124"/>
    </location>
</feature>
<feature type="topological domain" description="Cytoplasmic" evidence="8">
    <location>
        <begin position="125"/>
        <end position="143"/>
    </location>
</feature>
<feature type="transmembrane region" description="Helical; Name=4" evidence="1">
    <location>
        <begin position="144"/>
        <end position="164"/>
    </location>
</feature>
<feature type="topological domain" description="Extracellular" evidence="8">
    <location>
        <begin position="165"/>
        <end position="203"/>
    </location>
</feature>
<feature type="transmembrane region" description="Helical; Name=5" evidence="1">
    <location>
        <begin position="204"/>
        <end position="224"/>
    </location>
</feature>
<feature type="topological domain" description="Cytoplasmic" evidence="8">
    <location>
        <begin position="225"/>
        <end position="268"/>
    </location>
</feature>
<feature type="transmembrane region" description="Helical; Name=6" evidence="1">
    <location>
        <begin position="269"/>
        <end position="289"/>
    </location>
</feature>
<feature type="topological domain" description="Extracellular" evidence="8">
    <location>
        <begin position="290"/>
        <end position="298"/>
    </location>
</feature>
<feature type="transmembrane region" description="Helical; Name=7" evidence="1">
    <location>
        <begin position="299"/>
        <end position="319"/>
    </location>
</feature>
<feature type="topological domain" description="Cytoplasmic" evidence="8">
    <location>
        <begin position="320"/>
        <end position="431"/>
    </location>
</feature>
<feature type="region of interest" description="Disordered" evidence="4">
    <location>
        <begin position="235"/>
        <end position="257"/>
    </location>
</feature>
<feature type="region of interest" description="Disordered" evidence="4">
    <location>
        <begin position="393"/>
        <end position="431"/>
    </location>
</feature>
<feature type="compositionally biased region" description="Polar residues" evidence="4">
    <location>
        <begin position="235"/>
        <end position="252"/>
    </location>
</feature>
<feature type="compositionally biased region" description="Polar residues" evidence="4">
    <location>
        <begin position="393"/>
        <end position="414"/>
    </location>
</feature>
<feature type="compositionally biased region" description="Basic residues" evidence="4">
    <location>
        <begin position="415"/>
        <end position="425"/>
    </location>
</feature>
<feature type="glycosylation site" description="N-linked (GlcNAc...) asparagine" evidence="2">
    <location>
        <position position="5"/>
    </location>
</feature>
<feature type="disulfide bond" evidence="3">
    <location>
        <begin position="101"/>
        <end position="182"/>
    </location>
</feature>
<organism evidence="11">
    <name type="scientific">Caenorhabditis elegans</name>
    <dbReference type="NCBI Taxonomy" id="6239"/>
    <lineage>
        <taxon>Eukaryota</taxon>
        <taxon>Metazoa</taxon>
        <taxon>Ecdysozoa</taxon>
        <taxon>Nematoda</taxon>
        <taxon>Chromadorea</taxon>
        <taxon>Rhabditida</taxon>
        <taxon>Rhabditina</taxon>
        <taxon>Rhabditomorpha</taxon>
        <taxon>Rhabditoidea</taxon>
        <taxon>Rhabditidae</taxon>
        <taxon>Peloderinae</taxon>
        <taxon>Caenorhabditis</taxon>
    </lineage>
</organism>
<keyword id="KW-1003">Cell membrane</keyword>
<keyword id="KW-1015">Disulfide bond</keyword>
<keyword id="KW-0297">G-protein coupled receptor</keyword>
<keyword id="KW-0325">Glycoprotein</keyword>
<keyword id="KW-0472">Membrane</keyword>
<keyword id="KW-0675">Receptor</keyword>
<keyword id="KW-1185">Reference proteome</keyword>
<keyword id="KW-0807">Transducer</keyword>
<keyword id="KW-0812">Transmembrane</keyword>
<keyword id="KW-1133">Transmembrane helix</keyword>
<sequence length="431" mass="48523">MEFENLTKEEMEQLQKIYDDTISFERKIGIIIPTIFAVIILVGLVGNALVVIVAFGRQMRNSTNTLIIGLAISDLMFLLLCVPFTAVDYAAPTWIFPEWTCSMINFFQHTSAYCSVWTLTLMALDRYLAVVYPVESMTLRTPRNTVIALCFIYIIIIASQIPVGRMHGIYVYDFIMEKRSTCAILTIATAEATPTMARTYFMTFNVFGYVLPLGISVVLYGLMLRKLWDMPRPGNSQSVGGRNLTNRDSGSSIRRRPEATAAKRKVTRLVLCVLITWALCWLPLNVCFFMSGLAYPEPLVISHGVIMVIVQIASQVLAYTNSCLNPILYALMSQSFREGFIRVMKMLINKLSRGRFCTNYRRSALRTELTHYNQTPAHPANTVVQVSNGERSSLLKDNSSSATSVQPLRTSIQAKKTKNIGRSKSTRSYNL</sequence>